<reference key="1">
    <citation type="submission" date="2017-11" db="EMBL/GenBank/DDBJ databases">
        <authorList>
            <person name="Johnson J."/>
            <person name="Muren E."/>
            <person name="Swofford R."/>
            <person name="Turner-Maier J."/>
            <person name="Marinescu V.D."/>
            <person name="Genereux D.P."/>
            <person name="Alfoldi J."/>
            <person name="Birren B."/>
            <person name="Karlsson E.K."/>
            <person name="Lindblad-Toh K."/>
        </authorList>
    </citation>
    <scope>NUCLEOTIDE SEQUENCE [LARGE SCALE GENOMIC DNA]</scope>
</reference>
<reference key="2">
    <citation type="unpublished observations" date="2019-09">
        <authorList>
            <person name="Puppione D.L."/>
        </authorList>
    </citation>
    <scope>IDENTIFICATION</scope>
</reference>
<gene>
    <name type="primary">APOC1</name>
</gene>
<feature type="signal peptide" evidence="4">
    <location>
        <begin position="1"/>
        <end position="26"/>
    </location>
</feature>
<feature type="chain" id="PRO_0000448504" description="Apolipoprotein C-I">
    <location>
        <begin position="27"/>
        <end position="88"/>
    </location>
</feature>
<feature type="chain" id="PRO_0000448505" description="Truncated apolipoprotein C-I" evidence="3">
    <location>
        <begin position="29"/>
        <end position="88"/>
    </location>
</feature>
<dbReference type="EMBL" id="PITE01046491">
    <property type="status" value="NOT_ANNOTATED_CDS"/>
    <property type="molecule type" value="Genomic_DNA"/>
</dbReference>
<dbReference type="RefSeq" id="XP_045746357.1">
    <property type="nucleotide sequence ID" value="XM_045890401.3"/>
</dbReference>
<dbReference type="RefSeq" id="XP_064436435.1">
    <property type="nucleotide sequence ID" value="XM_064580365.1"/>
</dbReference>
<dbReference type="SMR" id="P0DTQ7"/>
<dbReference type="GeneID" id="123855035"/>
<dbReference type="GO" id="GO:0034364">
    <property type="term" value="C:high-density lipoprotein particle"/>
    <property type="evidence" value="ECO:0007669"/>
    <property type="project" value="TreeGrafter"/>
</dbReference>
<dbReference type="GO" id="GO:0034361">
    <property type="term" value="C:very-low-density lipoprotein particle"/>
    <property type="evidence" value="ECO:0007669"/>
    <property type="project" value="UniProtKB-KW"/>
</dbReference>
<dbReference type="GO" id="GO:0005504">
    <property type="term" value="F:fatty acid binding"/>
    <property type="evidence" value="ECO:0007669"/>
    <property type="project" value="TreeGrafter"/>
</dbReference>
<dbReference type="GO" id="GO:0004859">
    <property type="term" value="F:phospholipase inhibitor activity"/>
    <property type="evidence" value="ECO:0007669"/>
    <property type="project" value="TreeGrafter"/>
</dbReference>
<dbReference type="GO" id="GO:0006869">
    <property type="term" value="P:lipid transport"/>
    <property type="evidence" value="ECO:0007669"/>
    <property type="project" value="UniProtKB-KW"/>
</dbReference>
<dbReference type="GO" id="GO:0042157">
    <property type="term" value="P:lipoprotein metabolic process"/>
    <property type="evidence" value="ECO:0007669"/>
    <property type="project" value="InterPro"/>
</dbReference>
<dbReference type="GO" id="GO:0032375">
    <property type="term" value="P:negative regulation of cholesterol transport"/>
    <property type="evidence" value="ECO:0007669"/>
    <property type="project" value="TreeGrafter"/>
</dbReference>
<dbReference type="GO" id="GO:0050995">
    <property type="term" value="P:negative regulation of lipid catabolic process"/>
    <property type="evidence" value="ECO:0007669"/>
    <property type="project" value="TreeGrafter"/>
</dbReference>
<dbReference type="GO" id="GO:0010916">
    <property type="term" value="P:negative regulation of very-low-density lipoprotein particle clearance"/>
    <property type="evidence" value="ECO:0007669"/>
    <property type="project" value="TreeGrafter"/>
</dbReference>
<dbReference type="GO" id="GO:0006641">
    <property type="term" value="P:triglyceride metabolic process"/>
    <property type="evidence" value="ECO:0007669"/>
    <property type="project" value="TreeGrafter"/>
</dbReference>
<dbReference type="GO" id="GO:0034447">
    <property type="term" value="P:very-low-density lipoprotein particle clearance"/>
    <property type="evidence" value="ECO:0007669"/>
    <property type="project" value="TreeGrafter"/>
</dbReference>
<dbReference type="Gene3D" id="4.10.260.30">
    <property type="entry name" value="Apolipoprotein C-I"/>
    <property type="match status" value="1"/>
</dbReference>
<dbReference type="InterPro" id="IPR043081">
    <property type="entry name" value="ApoC-1_sf"/>
</dbReference>
<dbReference type="InterPro" id="IPR006781">
    <property type="entry name" value="ApoC-I"/>
</dbReference>
<dbReference type="PANTHER" id="PTHR16565">
    <property type="entry name" value="APOLIPOPROTEIN C-I"/>
    <property type="match status" value="1"/>
</dbReference>
<dbReference type="PANTHER" id="PTHR16565:SF2">
    <property type="entry name" value="APOLIPOPROTEIN C-I"/>
    <property type="match status" value="1"/>
</dbReference>
<dbReference type="Pfam" id="PF04691">
    <property type="entry name" value="ApoC-I"/>
    <property type="match status" value="1"/>
</dbReference>
<evidence type="ECO:0000250" key="1">
    <source>
        <dbReference type="UniProtKB" id="P02654"/>
    </source>
</evidence>
<evidence type="ECO:0000250" key="2">
    <source>
        <dbReference type="UniProtKB" id="P33047"/>
    </source>
</evidence>
<evidence type="ECO:0000250" key="3">
    <source>
        <dbReference type="UniProtKB" id="P86336"/>
    </source>
</evidence>
<evidence type="ECO:0000255" key="4"/>
<evidence type="ECO:0000305" key="5"/>
<name>APOC1_MIRAN</name>
<accession>P0DTQ7</accession>
<sequence length="88" mass="9730">MRLFLSLPVLVVVLAMVLEGPAPTQAAPEISSTLGRIPEKLKEFGNTLEDKARAAVESIKQSDIPAKTRNWFSETFNKVKEQLKTAFS</sequence>
<protein>
    <recommendedName>
        <fullName>Apolipoprotein C-I</fullName>
        <shortName>Apo-CI</shortName>
        <shortName>ApoC-I</shortName>
    </recommendedName>
    <alternativeName>
        <fullName>Apolipoprotein C1</fullName>
    </alternativeName>
    <component>
        <recommendedName>
            <fullName>Truncated apolipoprotein C-I</fullName>
        </recommendedName>
    </component>
</protein>
<comment type="function">
    <text evidence="1 2">Inhibitor of lipoprotein binding to the low density lipoprotein (LDL) receptor, LDL receptor-related protein, and very low density lipoprotein (VLDL) receptor. Associates with high density lipoproteins (HDL) and the triacylglycerol-rich lipoproteins in the plasma and makes up about 10% of the protein of the VLDL and 2% of that of HDL. Appears to interfere directly with fatty acid uptake and is also the major plasma inhibitor of cholesteryl ester transfer protein (CETP). Binds free fatty acids and reduces their intracellular esterification. Modulates the interaction of APOE with beta-migrating VLDL and inhibits binding of beta-VLDL to the LDL receptor-related protein.</text>
</comment>
<comment type="subcellular location">
    <subcellularLocation>
        <location evidence="1">Secreted</location>
    </subcellularLocation>
</comment>
<comment type="similarity">
    <text evidence="5">Belongs to the apolipoprotein C1 family.</text>
</comment>
<organism>
    <name type="scientific">Mirounga angustirostris</name>
    <name type="common">Northern elephant seal</name>
    <name type="synonym">Macrorhinus angustirostris</name>
    <dbReference type="NCBI Taxonomy" id="9716"/>
    <lineage>
        <taxon>Eukaryota</taxon>
        <taxon>Metazoa</taxon>
        <taxon>Chordata</taxon>
        <taxon>Craniata</taxon>
        <taxon>Vertebrata</taxon>
        <taxon>Euteleostomi</taxon>
        <taxon>Mammalia</taxon>
        <taxon>Eutheria</taxon>
        <taxon>Laurasiatheria</taxon>
        <taxon>Carnivora</taxon>
        <taxon>Caniformia</taxon>
        <taxon>Pinnipedia</taxon>
        <taxon>Phocidae</taxon>
        <taxon>Monachinae</taxon>
        <taxon>Miroungini</taxon>
        <taxon>Mirounga</taxon>
    </lineage>
</organism>
<proteinExistence type="inferred from homology"/>
<keyword id="KW-0445">Lipid transport</keyword>
<keyword id="KW-0964">Secreted</keyword>
<keyword id="KW-0732">Signal</keyword>
<keyword id="KW-0813">Transport</keyword>
<keyword id="KW-0850">VLDL</keyword>